<accession>O28096</accession>
<reference key="1">
    <citation type="journal article" date="1997" name="Nature">
        <title>The complete genome sequence of the hyperthermophilic, sulphate-reducing archaeon Archaeoglobus fulgidus.</title>
        <authorList>
            <person name="Klenk H.-P."/>
            <person name="Clayton R.A."/>
            <person name="Tomb J.-F."/>
            <person name="White O."/>
            <person name="Nelson K.E."/>
            <person name="Ketchum K.A."/>
            <person name="Dodson R.J."/>
            <person name="Gwinn M.L."/>
            <person name="Hickey E.K."/>
            <person name="Peterson J.D."/>
            <person name="Richardson D.L."/>
            <person name="Kerlavage A.R."/>
            <person name="Graham D.E."/>
            <person name="Kyrpides N.C."/>
            <person name="Fleischmann R.D."/>
            <person name="Quackenbush J."/>
            <person name="Lee N.H."/>
            <person name="Sutton G.G."/>
            <person name="Gill S.R."/>
            <person name="Kirkness E.F."/>
            <person name="Dougherty B.A."/>
            <person name="McKenney K."/>
            <person name="Adams M.D."/>
            <person name="Loftus B.J."/>
            <person name="Peterson S.N."/>
            <person name="Reich C.I."/>
            <person name="McNeil L.K."/>
            <person name="Badger J.H."/>
            <person name="Glodek A."/>
            <person name="Zhou L."/>
            <person name="Overbeek R."/>
            <person name="Gocayne J.D."/>
            <person name="Weidman J.F."/>
            <person name="McDonald L.A."/>
            <person name="Utterback T.R."/>
            <person name="Cotton M.D."/>
            <person name="Spriggs T."/>
            <person name="Artiach P."/>
            <person name="Kaine B.P."/>
            <person name="Sykes S.M."/>
            <person name="Sadow P.W."/>
            <person name="D'Andrea K.P."/>
            <person name="Bowman C."/>
            <person name="Fujii C."/>
            <person name="Garland S.A."/>
            <person name="Mason T.M."/>
            <person name="Olsen G.J."/>
            <person name="Fraser C.M."/>
            <person name="Smith H.O."/>
            <person name="Woese C.R."/>
            <person name="Venter J.C."/>
        </authorList>
    </citation>
    <scope>NUCLEOTIDE SEQUENCE [LARGE SCALE GENOMIC DNA]</scope>
    <source>
        <strain>ATCC 49558 / DSM 4304 / JCM 9628 / NBRC 100126 / VC-16</strain>
    </source>
</reference>
<protein>
    <recommendedName>
        <fullName>Uncharacterized protein AF_2187</fullName>
    </recommendedName>
</protein>
<sequence length="98" mass="11371">MSYRESRQRLERLTESPSHLTIWRRMQELSYESKFEYESFVSADGTKLHAKRSKKLDVKVIAGKSVIVGINESHREMRGEYDVKATVVGDADRDLSCF</sequence>
<name>Y2187_ARCFU</name>
<feature type="chain" id="PRO_0000128115" description="Uncharacterized protein AF_2187">
    <location>
        <begin position="1"/>
        <end position="98"/>
    </location>
</feature>
<proteinExistence type="predicted"/>
<gene>
    <name type="ordered locus">AF_2187</name>
</gene>
<keyword id="KW-1185">Reference proteome</keyword>
<organism>
    <name type="scientific">Archaeoglobus fulgidus (strain ATCC 49558 / DSM 4304 / JCM 9628 / NBRC 100126 / VC-16)</name>
    <dbReference type="NCBI Taxonomy" id="224325"/>
    <lineage>
        <taxon>Archaea</taxon>
        <taxon>Methanobacteriati</taxon>
        <taxon>Methanobacteriota</taxon>
        <taxon>Archaeoglobi</taxon>
        <taxon>Archaeoglobales</taxon>
        <taxon>Archaeoglobaceae</taxon>
        <taxon>Archaeoglobus</taxon>
    </lineage>
</organism>
<dbReference type="EMBL" id="AE000782">
    <property type="protein sequence ID" value="AAB89080.1"/>
    <property type="molecule type" value="Genomic_DNA"/>
</dbReference>
<dbReference type="PIR" id="C69523">
    <property type="entry name" value="C69523"/>
</dbReference>
<dbReference type="RefSeq" id="WP_010879676.1">
    <property type="nucleotide sequence ID" value="NC_000917.1"/>
</dbReference>
<dbReference type="SMR" id="O28096"/>
<dbReference type="STRING" id="224325.AF_2187"/>
<dbReference type="PaxDb" id="224325-AF_2187"/>
<dbReference type="EnsemblBacteria" id="AAB89080">
    <property type="protein sequence ID" value="AAB89080"/>
    <property type="gene ID" value="AF_2187"/>
</dbReference>
<dbReference type="KEGG" id="afu:AF_2187"/>
<dbReference type="HOGENOM" id="CLU_2327117_0_0_2"/>
<dbReference type="OrthoDB" id="198848at2157"/>
<dbReference type="Proteomes" id="UP000002199">
    <property type="component" value="Chromosome"/>
</dbReference>